<feature type="chain" id="PRO_0000353168" description="2-keto-3-deoxy-L-rhamnonate aldolase">
    <location>
        <begin position="1"/>
        <end position="267"/>
    </location>
</feature>
<feature type="active site" description="Proton acceptor" evidence="1">
    <location>
        <position position="49"/>
    </location>
</feature>
<feature type="binding site" evidence="1">
    <location>
        <position position="151"/>
    </location>
    <ligand>
        <name>substrate</name>
    </ligand>
</feature>
<feature type="binding site" evidence="1">
    <location>
        <position position="153"/>
    </location>
    <ligand>
        <name>Mg(2+)</name>
        <dbReference type="ChEBI" id="CHEBI:18420"/>
    </ligand>
</feature>
<feature type="binding site" evidence="1">
    <location>
        <position position="178"/>
    </location>
    <ligand>
        <name>substrate</name>
    </ligand>
</feature>
<feature type="binding site" evidence="1">
    <location>
        <position position="179"/>
    </location>
    <ligand>
        <name>Mg(2+)</name>
        <dbReference type="ChEBI" id="CHEBI:18420"/>
    </ligand>
</feature>
<feature type="binding site" evidence="1">
    <location>
        <position position="179"/>
    </location>
    <ligand>
        <name>substrate</name>
    </ligand>
</feature>
<feature type="site" description="Transition state stabilizer" evidence="1">
    <location>
        <position position="74"/>
    </location>
</feature>
<feature type="site" description="Increases basicity of active site His" evidence="1">
    <location>
        <position position="88"/>
    </location>
</feature>
<proteinExistence type="inferred from homology"/>
<protein>
    <recommendedName>
        <fullName evidence="1">2-keto-3-deoxy-L-rhamnonate aldolase</fullName>
        <shortName evidence="1">KDR aldolase</shortName>
        <ecNumber evidence="1">4.1.2.53</ecNumber>
    </recommendedName>
    <alternativeName>
        <fullName evidence="1">2-dehydro-3-deoxyrhamnonate aldolase</fullName>
    </alternativeName>
</protein>
<comment type="function">
    <text evidence="1">Catalyzes the reversible retro-aldol cleavage of 2-keto-3-deoxy-L-rhamnonate (KDR) to pyruvate and lactaldehyde.</text>
</comment>
<comment type="catalytic activity">
    <reaction evidence="1">
        <text>2-dehydro-3-deoxy-L-rhamnonate = (S)-lactaldehyde + pyruvate</text>
        <dbReference type="Rhea" id="RHEA:25784"/>
        <dbReference type="ChEBI" id="CHEBI:15361"/>
        <dbReference type="ChEBI" id="CHEBI:18041"/>
        <dbReference type="ChEBI" id="CHEBI:58371"/>
        <dbReference type="EC" id="4.1.2.53"/>
    </reaction>
</comment>
<comment type="cofactor">
    <cofactor evidence="1">
        <name>Mg(2+)</name>
        <dbReference type="ChEBI" id="CHEBI:18420"/>
    </cofactor>
    <text evidence="1">Binds 1 Mg(2+) ion per subunit.</text>
</comment>
<comment type="subunit">
    <text evidence="1">Homohexamer.</text>
</comment>
<comment type="similarity">
    <text evidence="1">Belongs to the HpcH/HpaI aldolase family. KDR aldolase subfamily.</text>
</comment>
<reference key="1">
    <citation type="journal article" date="2002" name="Proc. Natl. Acad. Sci. U.S.A.">
        <title>Extensive mosaic structure revealed by the complete genome sequence of uropathogenic Escherichia coli.</title>
        <authorList>
            <person name="Welch R.A."/>
            <person name="Burland V."/>
            <person name="Plunkett G. III"/>
            <person name="Redford P."/>
            <person name="Roesch P."/>
            <person name="Rasko D."/>
            <person name="Buckles E.L."/>
            <person name="Liou S.-R."/>
            <person name="Boutin A."/>
            <person name="Hackett J."/>
            <person name="Stroud D."/>
            <person name="Mayhew G.F."/>
            <person name="Rose D.J."/>
            <person name="Zhou S."/>
            <person name="Schwartz D.C."/>
            <person name="Perna N.T."/>
            <person name="Mobley H.L.T."/>
            <person name="Donnenberg M.S."/>
            <person name="Blattner F.R."/>
        </authorList>
    </citation>
    <scope>NUCLEOTIDE SEQUENCE [LARGE SCALE GENOMIC DNA]</scope>
    <source>
        <strain>CFT073 / ATCC 700928 / UPEC</strain>
    </source>
</reference>
<dbReference type="EC" id="4.1.2.53" evidence="1"/>
<dbReference type="EMBL" id="AE014075">
    <property type="protein sequence ID" value="AAN81241.1"/>
    <property type="molecule type" value="Genomic_DNA"/>
</dbReference>
<dbReference type="SMR" id="Q8FFN0"/>
<dbReference type="STRING" id="199310.c2787"/>
<dbReference type="KEGG" id="ecc:c2787"/>
<dbReference type="eggNOG" id="COG3836">
    <property type="taxonomic scope" value="Bacteria"/>
</dbReference>
<dbReference type="HOGENOM" id="CLU_059964_1_0_6"/>
<dbReference type="BioCyc" id="ECOL199310:C2787-MONOMER"/>
<dbReference type="Proteomes" id="UP000001410">
    <property type="component" value="Chromosome"/>
</dbReference>
<dbReference type="GO" id="GO:0005737">
    <property type="term" value="C:cytoplasm"/>
    <property type="evidence" value="ECO:0007669"/>
    <property type="project" value="TreeGrafter"/>
</dbReference>
<dbReference type="GO" id="GO:0106099">
    <property type="term" value="F:2-keto-3-deoxy-L-rhamnonate aldolase activity"/>
    <property type="evidence" value="ECO:0007669"/>
    <property type="project" value="UniProtKB-EC"/>
</dbReference>
<dbReference type="GO" id="GO:0000287">
    <property type="term" value="F:magnesium ion binding"/>
    <property type="evidence" value="ECO:0007669"/>
    <property type="project" value="UniProtKB-UniRule"/>
</dbReference>
<dbReference type="FunFam" id="3.20.20.60:FF:000004">
    <property type="entry name" value="5-keto-4-deoxy-D-glucarate aldolase"/>
    <property type="match status" value="1"/>
</dbReference>
<dbReference type="Gene3D" id="3.20.20.60">
    <property type="entry name" value="Phosphoenolpyruvate-binding domains"/>
    <property type="match status" value="1"/>
</dbReference>
<dbReference type="HAMAP" id="MF_01290">
    <property type="entry name" value="KDR_aldolase"/>
    <property type="match status" value="1"/>
</dbReference>
<dbReference type="InterPro" id="IPR005000">
    <property type="entry name" value="Aldolase/citrate-lyase_domain"/>
</dbReference>
<dbReference type="InterPro" id="IPR050251">
    <property type="entry name" value="HpcH-HpaI_aldolase"/>
</dbReference>
<dbReference type="InterPro" id="IPR023593">
    <property type="entry name" value="KDR_aldolase"/>
</dbReference>
<dbReference type="InterPro" id="IPR015813">
    <property type="entry name" value="Pyrv/PenolPyrv_kinase-like_dom"/>
</dbReference>
<dbReference type="InterPro" id="IPR040442">
    <property type="entry name" value="Pyrv_kinase-like_dom_sf"/>
</dbReference>
<dbReference type="NCBIfam" id="NF007521">
    <property type="entry name" value="PRK10128.1"/>
    <property type="match status" value="1"/>
</dbReference>
<dbReference type="PANTHER" id="PTHR30502">
    <property type="entry name" value="2-KETO-3-DEOXY-L-RHAMNONATE ALDOLASE"/>
    <property type="match status" value="1"/>
</dbReference>
<dbReference type="PANTHER" id="PTHR30502:SF5">
    <property type="entry name" value="2-KETO-3-DEOXY-L-RHAMNONATE ALDOLASE"/>
    <property type="match status" value="1"/>
</dbReference>
<dbReference type="Pfam" id="PF03328">
    <property type="entry name" value="HpcH_HpaI"/>
    <property type="match status" value="1"/>
</dbReference>
<dbReference type="SUPFAM" id="SSF51621">
    <property type="entry name" value="Phosphoenolpyruvate/pyruvate domain"/>
    <property type="match status" value="1"/>
</dbReference>
<organism>
    <name type="scientific">Escherichia coli O6:H1 (strain CFT073 / ATCC 700928 / UPEC)</name>
    <dbReference type="NCBI Taxonomy" id="199310"/>
    <lineage>
        <taxon>Bacteria</taxon>
        <taxon>Pseudomonadati</taxon>
        <taxon>Pseudomonadota</taxon>
        <taxon>Gammaproteobacteria</taxon>
        <taxon>Enterobacterales</taxon>
        <taxon>Enterobacteriaceae</taxon>
        <taxon>Escherichia</taxon>
    </lineage>
</organism>
<name>RHMA_ECOL6</name>
<sequence>MNALLTNPFKERLRKGEVQIGLWLSSTTAYMAEIAATSGYDWLLIDGEHAPNTIQDLYHQLQAVAPYASHPVIRPVEGSKPLIKQVLDIGAQTLLIPMVDTADQARQVVSATRYPPYGERGVGASVARAARWGRIENYMAQVNDSLCLLVQVESKTALDNLDEILDVEGIDGVFIGPADLSASLGYPDNAGHPEVQRIIETSIRRIRAAGKAAGFLAVAPDMAQQCLAWGANFVAVGVDTMLYSDALDQRLAMFKSGKNGPRVKGSY</sequence>
<evidence type="ECO:0000255" key="1">
    <source>
        <dbReference type="HAMAP-Rule" id="MF_01290"/>
    </source>
</evidence>
<accession>Q8FFN0</accession>
<keyword id="KW-0456">Lyase</keyword>
<keyword id="KW-0460">Magnesium</keyword>
<keyword id="KW-0479">Metal-binding</keyword>
<keyword id="KW-1185">Reference proteome</keyword>
<gene>
    <name evidence="1" type="primary">rhmA</name>
    <name type="ordered locus">c2787</name>
</gene>